<accession>P25987</accession>
<comment type="function">
    <text evidence="1">Catalyzes the transfer of the gamma-phospho group of ATP to thymidine to generate dTMP in the salvage pathway of pyrimidine synthesis. The dTMP serves as a substrate for DNA polymerase during viral DNA replication. Allows the virus to be reactivated and to grow in non-proliferative cells lacking a high concentration of phosphorylated nucleic acid precursors.</text>
</comment>
<comment type="catalytic activity">
    <reaction evidence="1">
        <text>thymidine + ATP = dTMP + ADP + H(+)</text>
        <dbReference type="Rhea" id="RHEA:19129"/>
        <dbReference type="ChEBI" id="CHEBI:15378"/>
        <dbReference type="ChEBI" id="CHEBI:17748"/>
        <dbReference type="ChEBI" id="CHEBI:30616"/>
        <dbReference type="ChEBI" id="CHEBI:63528"/>
        <dbReference type="ChEBI" id="CHEBI:456216"/>
        <dbReference type="EC" id="2.7.1.21"/>
    </reaction>
</comment>
<comment type="subunit">
    <text evidence="1">Homodimer.</text>
</comment>
<comment type="similarity">
    <text evidence="1">Belongs to the herpesviridae thymidine kinase family.</text>
</comment>
<proteinExistence type="inferred from homology"/>
<reference key="1">
    <citation type="journal article" date="1989" name="J. Gen. Virol.">
        <title>Nucleotide and predicted amino acid sequences of the Marek's disease virus and turkey herpesvirus thymidine kinase genes; comparison with thymidine kinase genes of other herpesviruses.</title>
        <authorList>
            <person name="Scott S.D."/>
            <person name="Ross N.L.J."/>
            <person name="Binns M.M."/>
        </authorList>
    </citation>
    <scope>NUCLEOTIDE SEQUENCE</scope>
</reference>
<name>KITH_MEHV1</name>
<protein>
    <recommendedName>
        <fullName evidence="1">Thymidine kinase</fullName>
        <ecNumber evidence="1">2.7.1.21</ecNumber>
    </recommendedName>
</protein>
<sequence length="350" mass="39968">MALPRRPPTLTRVYLDGPFGIGKTSILNAMPDHTPDGAPILKVYEPMKYWRCQSTDLVVAANETPERRRGGALSRFQSDMIMASIQARFADPYLLFHERLSSKCRGKIEICDTPAIILMLDRHPVAAILCFPITRYLLGEYSLEMLISSIIRLPLESPGCNLTVTILPDEKEHVNRICSRDRPGETADRNMLRTLNAVYASLVDTVKYANLTCPYEKESWEMEWLGLPWFEESLLEEFISRPRPVICSRTRMPLDRTLLAIFKRKELCSENGELLTQYSWILWGLLTKLHTINVELFDISGMSRRECASAIMHTMPERLSTLASWNDLCELEDDVISYNKGMCNEVGASR</sequence>
<dbReference type="EC" id="2.7.1.21" evidence="1"/>
<dbReference type="SMR" id="P25987"/>
<dbReference type="KEGG" id="vg:918500"/>
<dbReference type="GO" id="GO:0005524">
    <property type="term" value="F:ATP binding"/>
    <property type="evidence" value="ECO:0007669"/>
    <property type="project" value="UniProtKB-KW"/>
</dbReference>
<dbReference type="GO" id="GO:0004797">
    <property type="term" value="F:thymidine kinase activity"/>
    <property type="evidence" value="ECO:0007669"/>
    <property type="project" value="UniProtKB-EC"/>
</dbReference>
<dbReference type="GO" id="GO:0071897">
    <property type="term" value="P:DNA biosynthetic process"/>
    <property type="evidence" value="ECO:0007669"/>
    <property type="project" value="UniProtKB-KW"/>
</dbReference>
<dbReference type="GO" id="GO:0006230">
    <property type="term" value="P:TMP biosynthetic process"/>
    <property type="evidence" value="ECO:0007669"/>
    <property type="project" value="InterPro"/>
</dbReference>
<dbReference type="Gene3D" id="3.40.50.300">
    <property type="entry name" value="P-loop containing nucleotide triphosphate hydrolases"/>
    <property type="match status" value="1"/>
</dbReference>
<dbReference type="HAMAP" id="MF_04029">
    <property type="entry name" value="HSV_KITH"/>
    <property type="match status" value="1"/>
</dbReference>
<dbReference type="InterPro" id="IPR001889">
    <property type="entry name" value="Herpes_TK"/>
</dbReference>
<dbReference type="InterPro" id="IPR027417">
    <property type="entry name" value="P-loop_NTPase"/>
</dbReference>
<dbReference type="Pfam" id="PF00693">
    <property type="entry name" value="Herpes_TK"/>
    <property type="match status" value="1"/>
</dbReference>
<dbReference type="SUPFAM" id="SSF52540">
    <property type="entry name" value="P-loop containing nucleoside triphosphate hydrolases"/>
    <property type="match status" value="1"/>
</dbReference>
<organismHost>
    <name type="scientific">Gallus gallus</name>
    <name type="common">Chicken</name>
    <dbReference type="NCBI Taxonomy" id="9031"/>
</organismHost>
<organismHost>
    <name type="scientific">Meleagris gallopavo</name>
    <name type="common">Wild turkey</name>
    <dbReference type="NCBI Taxonomy" id="9103"/>
</organismHost>
<organism>
    <name type="scientific">Meleagrid herpesvirus 1</name>
    <name type="common">MeHV-1</name>
    <name type="synonym">Turkey herpesvirus</name>
    <dbReference type="NCBI Taxonomy" id="37108"/>
    <lineage>
        <taxon>Viruses</taxon>
        <taxon>Duplodnaviria</taxon>
        <taxon>Heunggongvirae</taxon>
        <taxon>Peploviricota</taxon>
        <taxon>Herviviricetes</taxon>
        <taxon>Herpesvirales</taxon>
        <taxon>Orthoherpesviridae</taxon>
        <taxon>Alphaherpesvirinae</taxon>
        <taxon>Mardivirus</taxon>
        <taxon>Mardivirus meleagridalpha1</taxon>
    </lineage>
</organism>
<gene>
    <name evidence="1" type="primary">TK</name>
</gene>
<feature type="chain" id="PRO_0000175080" description="Thymidine kinase">
    <location>
        <begin position="1"/>
        <end position="350"/>
    </location>
</feature>
<feature type="active site" description="Proton acceptor" evidence="1">
    <location>
        <position position="45"/>
    </location>
</feature>
<feature type="binding site" evidence="1">
    <location>
        <begin position="17"/>
        <end position="24"/>
    </location>
    <ligand>
        <name>ATP</name>
        <dbReference type="ChEBI" id="CHEBI:30616"/>
    </ligand>
</feature>
<feature type="binding site" evidence="1">
    <location>
        <position position="86"/>
    </location>
    <ligand>
        <name>substrate</name>
    </ligand>
</feature>
<feature type="binding site" evidence="1">
    <location>
        <position position="176"/>
    </location>
    <ligand>
        <name>ATP</name>
        <dbReference type="ChEBI" id="CHEBI:30616"/>
    </ligand>
</feature>
<feature type="binding site" evidence="1">
    <location>
        <position position="182"/>
    </location>
    <ligand>
        <name>substrate</name>
    </ligand>
</feature>
<keyword id="KW-0067">ATP-binding</keyword>
<keyword id="KW-0237">DNA synthesis</keyword>
<keyword id="KW-0244">Early protein</keyword>
<keyword id="KW-0418">Kinase</keyword>
<keyword id="KW-0547">Nucleotide-binding</keyword>
<keyword id="KW-0808">Transferase</keyword>
<evidence type="ECO:0000255" key="1">
    <source>
        <dbReference type="HAMAP-Rule" id="MF_04029"/>
    </source>
</evidence>